<organism>
    <name type="scientific">Dictyostelium discoideum</name>
    <name type="common">Social amoeba</name>
    <dbReference type="NCBI Taxonomy" id="44689"/>
    <lineage>
        <taxon>Eukaryota</taxon>
        <taxon>Amoebozoa</taxon>
        <taxon>Evosea</taxon>
        <taxon>Eumycetozoa</taxon>
        <taxon>Dictyostelia</taxon>
        <taxon>Dictyosteliales</taxon>
        <taxon>Dictyosteliaceae</taxon>
        <taxon>Dictyostelium</taxon>
    </lineage>
</organism>
<name>EIF3K_DICDI</name>
<evidence type="ECO:0000255" key="1">
    <source>
        <dbReference type="HAMAP-Rule" id="MF_03010"/>
    </source>
</evidence>
<evidence type="ECO:0000255" key="2">
    <source>
        <dbReference type="PROSITE-ProRule" id="PRU01185"/>
    </source>
</evidence>
<evidence type="ECO:0000256" key="3">
    <source>
        <dbReference type="SAM" id="MobiDB-lite"/>
    </source>
</evidence>
<proteinExistence type="inferred from homology"/>
<keyword id="KW-0963">Cytoplasm</keyword>
<keyword id="KW-0396">Initiation factor</keyword>
<keyword id="KW-0648">Protein biosynthesis</keyword>
<keyword id="KW-1185">Reference proteome</keyword>
<feature type="chain" id="PRO_0000365050" description="Eukaryotic translation initiation factor 3 subunit K">
    <location>
        <begin position="1"/>
        <end position="246"/>
    </location>
</feature>
<feature type="domain" description="PCI" evidence="2">
    <location>
        <begin position="72"/>
        <end position="235"/>
    </location>
</feature>
<feature type="region of interest" description="Disordered" evidence="3">
    <location>
        <begin position="1"/>
        <end position="30"/>
    </location>
</feature>
<feature type="compositionally biased region" description="Low complexity" evidence="3">
    <location>
        <begin position="1"/>
        <end position="21"/>
    </location>
</feature>
<protein>
    <recommendedName>
        <fullName evidence="1">Eukaryotic translation initiation factor 3 subunit K</fullName>
        <shortName evidence="1">eIF3k</shortName>
    </recommendedName>
    <alternativeName>
        <fullName evidence="1">Eukaryotic translation initiation factor 3 subunit 12</fullName>
    </alternativeName>
    <alternativeName>
        <fullName evidence="1">eIF-3 p25</fullName>
    </alternativeName>
</protein>
<gene>
    <name type="primary">eif3K</name>
    <name type="synonym">eif3s12</name>
    <name type="ORF">DDB_G0291404</name>
</gene>
<sequence>MENDQDQQQQQQQSQQQQPQQEEQEQVDVDLSSLQGQERIEYINTLIADSYNIAIAKKLEEFLDIQINENTYLFQANSTLLKLYQFNPTHLNKDSIAKMLAKALMNFPCNDFLFLSYMIPSIIQKEEPLLKLFILNNFLETCKFKEAWTHINSHSFFSEIPSFIDNIRNFISGVLSITYQNISITMLGELLNLSDRTQLVDYIQSKQPTWKISDSTVSLQSDNSKQKKADTFTFDQLSRILPTFIK</sequence>
<reference key="1">
    <citation type="journal article" date="2005" name="Nature">
        <title>The genome of the social amoeba Dictyostelium discoideum.</title>
        <authorList>
            <person name="Eichinger L."/>
            <person name="Pachebat J.A."/>
            <person name="Gloeckner G."/>
            <person name="Rajandream M.A."/>
            <person name="Sucgang R."/>
            <person name="Berriman M."/>
            <person name="Song J."/>
            <person name="Olsen R."/>
            <person name="Szafranski K."/>
            <person name="Xu Q."/>
            <person name="Tunggal B."/>
            <person name="Kummerfeld S."/>
            <person name="Madera M."/>
            <person name="Konfortov B.A."/>
            <person name="Rivero F."/>
            <person name="Bankier A.T."/>
            <person name="Lehmann R."/>
            <person name="Hamlin N."/>
            <person name="Davies R."/>
            <person name="Gaudet P."/>
            <person name="Fey P."/>
            <person name="Pilcher K."/>
            <person name="Chen G."/>
            <person name="Saunders D."/>
            <person name="Sodergren E.J."/>
            <person name="Davis P."/>
            <person name="Kerhornou A."/>
            <person name="Nie X."/>
            <person name="Hall N."/>
            <person name="Anjard C."/>
            <person name="Hemphill L."/>
            <person name="Bason N."/>
            <person name="Farbrother P."/>
            <person name="Desany B."/>
            <person name="Just E."/>
            <person name="Morio T."/>
            <person name="Rost R."/>
            <person name="Churcher C.M."/>
            <person name="Cooper J."/>
            <person name="Haydock S."/>
            <person name="van Driessche N."/>
            <person name="Cronin A."/>
            <person name="Goodhead I."/>
            <person name="Muzny D.M."/>
            <person name="Mourier T."/>
            <person name="Pain A."/>
            <person name="Lu M."/>
            <person name="Harper D."/>
            <person name="Lindsay R."/>
            <person name="Hauser H."/>
            <person name="James K.D."/>
            <person name="Quiles M."/>
            <person name="Madan Babu M."/>
            <person name="Saito T."/>
            <person name="Buchrieser C."/>
            <person name="Wardroper A."/>
            <person name="Felder M."/>
            <person name="Thangavelu M."/>
            <person name="Johnson D."/>
            <person name="Knights A."/>
            <person name="Loulseged H."/>
            <person name="Mungall K.L."/>
            <person name="Oliver K."/>
            <person name="Price C."/>
            <person name="Quail M.A."/>
            <person name="Urushihara H."/>
            <person name="Hernandez J."/>
            <person name="Rabbinowitsch E."/>
            <person name="Steffen D."/>
            <person name="Sanders M."/>
            <person name="Ma J."/>
            <person name="Kohara Y."/>
            <person name="Sharp S."/>
            <person name="Simmonds M.N."/>
            <person name="Spiegler S."/>
            <person name="Tivey A."/>
            <person name="Sugano S."/>
            <person name="White B."/>
            <person name="Walker D."/>
            <person name="Woodward J.R."/>
            <person name="Winckler T."/>
            <person name="Tanaka Y."/>
            <person name="Shaulsky G."/>
            <person name="Schleicher M."/>
            <person name="Weinstock G.M."/>
            <person name="Rosenthal A."/>
            <person name="Cox E.C."/>
            <person name="Chisholm R.L."/>
            <person name="Gibbs R.A."/>
            <person name="Loomis W.F."/>
            <person name="Platzer M."/>
            <person name="Kay R.R."/>
            <person name="Williams J.G."/>
            <person name="Dear P.H."/>
            <person name="Noegel A.A."/>
            <person name="Barrell B.G."/>
            <person name="Kuspa A."/>
        </authorList>
    </citation>
    <scope>NUCLEOTIDE SEQUENCE [LARGE SCALE GENOMIC DNA]</scope>
    <source>
        <strain>AX4</strain>
    </source>
</reference>
<accession>Q54EQ1</accession>
<comment type="function">
    <text evidence="1">Component of the eukaryotic translation initiation factor 3 (eIF-3) complex, which is involved in protein synthesis of a specialized repertoire of mRNAs and, together with other initiation factors, stimulates binding of mRNA and methionyl-tRNAi to the 40S ribosome. The eIF-3 complex specifically targets and initiates translation of a subset of mRNAs involved in cell proliferation.</text>
</comment>
<comment type="subunit">
    <text evidence="1">Component of the eukaryotic translation initiation factor 3 (eIF-3) complex.</text>
</comment>
<comment type="subcellular location">
    <subcellularLocation>
        <location evidence="1">Cytoplasm</location>
    </subcellularLocation>
</comment>
<comment type="similarity">
    <text evidence="1">Belongs to the eIF-3 subunit K family.</text>
</comment>
<dbReference type="EMBL" id="AAFI02000177">
    <property type="protein sequence ID" value="EAL61686.2"/>
    <property type="molecule type" value="Genomic_DNA"/>
</dbReference>
<dbReference type="RefSeq" id="XP_635189.2">
    <property type="nucleotide sequence ID" value="XM_630097.2"/>
</dbReference>
<dbReference type="SMR" id="Q54EQ1"/>
<dbReference type="FunCoup" id="Q54EQ1">
    <property type="interactions" value="766"/>
</dbReference>
<dbReference type="STRING" id="44689.Q54EQ1"/>
<dbReference type="PaxDb" id="44689-DDB0234246"/>
<dbReference type="EnsemblProtists" id="EAL61686">
    <property type="protein sequence ID" value="EAL61686"/>
    <property type="gene ID" value="DDB_G0291404"/>
</dbReference>
<dbReference type="GeneID" id="8628134"/>
<dbReference type="KEGG" id="ddi:DDB_G0291404"/>
<dbReference type="dictyBase" id="DDB_G0291404">
    <property type="gene designation" value="eif3K"/>
</dbReference>
<dbReference type="VEuPathDB" id="AmoebaDB:DDB_G0291404"/>
<dbReference type="eggNOG" id="KOG3252">
    <property type="taxonomic scope" value="Eukaryota"/>
</dbReference>
<dbReference type="HOGENOM" id="CLU_076723_0_0_1"/>
<dbReference type="InParanoid" id="Q54EQ1"/>
<dbReference type="OMA" id="GDDLCAD"/>
<dbReference type="PhylomeDB" id="Q54EQ1"/>
<dbReference type="Reactome" id="R-DDI-156827">
    <property type="pathway name" value="L13a-mediated translational silencing of Ceruloplasmin expression"/>
</dbReference>
<dbReference type="Reactome" id="R-DDI-72689">
    <property type="pathway name" value="Formation of a pool of free 40S subunits"/>
</dbReference>
<dbReference type="Reactome" id="R-DDI-72695">
    <property type="pathway name" value="Formation of the ternary complex, and subsequently, the 43S complex"/>
</dbReference>
<dbReference type="Reactome" id="R-DDI-72702">
    <property type="pathway name" value="Ribosomal scanning and start codon recognition"/>
</dbReference>
<dbReference type="PRO" id="PR:Q54EQ1"/>
<dbReference type="Proteomes" id="UP000002195">
    <property type="component" value="Chromosome 6"/>
</dbReference>
<dbReference type="GO" id="GO:0016282">
    <property type="term" value="C:eukaryotic 43S preinitiation complex"/>
    <property type="evidence" value="ECO:0007669"/>
    <property type="project" value="UniProtKB-UniRule"/>
</dbReference>
<dbReference type="GO" id="GO:0033290">
    <property type="term" value="C:eukaryotic 48S preinitiation complex"/>
    <property type="evidence" value="ECO:0007669"/>
    <property type="project" value="UniProtKB-UniRule"/>
</dbReference>
<dbReference type="GO" id="GO:0005852">
    <property type="term" value="C:eukaryotic translation initiation factor 3 complex"/>
    <property type="evidence" value="ECO:0000318"/>
    <property type="project" value="GO_Central"/>
</dbReference>
<dbReference type="GO" id="GO:0043022">
    <property type="term" value="F:ribosome binding"/>
    <property type="evidence" value="ECO:0007669"/>
    <property type="project" value="InterPro"/>
</dbReference>
<dbReference type="GO" id="GO:0003723">
    <property type="term" value="F:RNA binding"/>
    <property type="evidence" value="ECO:0007669"/>
    <property type="project" value="UniProtKB-UniRule"/>
</dbReference>
<dbReference type="GO" id="GO:0003743">
    <property type="term" value="F:translation initiation factor activity"/>
    <property type="evidence" value="ECO:0007669"/>
    <property type="project" value="UniProtKB-UniRule"/>
</dbReference>
<dbReference type="GO" id="GO:0001732">
    <property type="term" value="P:formation of cytoplasmic translation initiation complex"/>
    <property type="evidence" value="ECO:0007669"/>
    <property type="project" value="UniProtKB-UniRule"/>
</dbReference>
<dbReference type="GO" id="GO:0006446">
    <property type="term" value="P:regulation of translational initiation"/>
    <property type="evidence" value="ECO:0007669"/>
    <property type="project" value="InterPro"/>
</dbReference>
<dbReference type="FunFam" id="1.10.10.10:FF:000212">
    <property type="entry name" value="Eukaryotic translation initiation factor 3 subunit K"/>
    <property type="match status" value="1"/>
</dbReference>
<dbReference type="Gene3D" id="1.25.40.250">
    <property type="entry name" value="ARM repeat, domain 1"/>
    <property type="match status" value="1"/>
</dbReference>
<dbReference type="Gene3D" id="1.10.10.10">
    <property type="entry name" value="Winged helix-like DNA-binding domain superfamily/Winged helix DNA-binding domain"/>
    <property type="match status" value="1"/>
</dbReference>
<dbReference type="HAMAP" id="MF_03010">
    <property type="entry name" value="eIF3k"/>
    <property type="match status" value="1"/>
</dbReference>
<dbReference type="InterPro" id="IPR016024">
    <property type="entry name" value="ARM-type_fold"/>
</dbReference>
<dbReference type="InterPro" id="IPR033464">
    <property type="entry name" value="CSN8_PSD8_EIF3K"/>
</dbReference>
<dbReference type="InterPro" id="IPR009374">
    <property type="entry name" value="eIF3k"/>
</dbReference>
<dbReference type="InterPro" id="IPR000717">
    <property type="entry name" value="PCI_dom"/>
</dbReference>
<dbReference type="InterPro" id="IPR016020">
    <property type="entry name" value="Transl_init_fac_sub12_N_euk"/>
</dbReference>
<dbReference type="InterPro" id="IPR036388">
    <property type="entry name" value="WH-like_DNA-bd_sf"/>
</dbReference>
<dbReference type="InterPro" id="IPR036390">
    <property type="entry name" value="WH_DNA-bd_sf"/>
</dbReference>
<dbReference type="PANTHER" id="PTHR13022">
    <property type="entry name" value="EUKARYOTIC TRANSLATION INITIATION FACTOR 3 SUBUNIT 11"/>
    <property type="match status" value="1"/>
</dbReference>
<dbReference type="PANTHER" id="PTHR13022:SF0">
    <property type="entry name" value="EUKARYOTIC TRANSLATION INITIATION FACTOR 3 SUBUNIT K"/>
    <property type="match status" value="1"/>
</dbReference>
<dbReference type="Pfam" id="PF10075">
    <property type="entry name" value="CSN8_PSD8_EIF3K"/>
    <property type="match status" value="1"/>
</dbReference>
<dbReference type="SUPFAM" id="SSF48371">
    <property type="entry name" value="ARM repeat"/>
    <property type="match status" value="1"/>
</dbReference>
<dbReference type="SUPFAM" id="SSF46785">
    <property type="entry name" value="Winged helix' DNA-binding domain"/>
    <property type="match status" value="1"/>
</dbReference>
<dbReference type="PROSITE" id="PS50250">
    <property type="entry name" value="PCI"/>
    <property type="match status" value="1"/>
</dbReference>